<proteinExistence type="inferred from homology"/>
<evidence type="ECO:0000305" key="1"/>
<gene>
    <name type="primary">RPS28A</name>
    <name type="ordered locus">CAGL0K06061g</name>
</gene>
<gene>
    <name type="primary">RPS28B</name>
    <name type="ordered locus">CAGL0L04510g</name>
</gene>
<dbReference type="EMBL" id="CR380957">
    <property type="protein sequence ID" value="CAG61447.1"/>
    <property type="molecule type" value="Genomic_DNA"/>
</dbReference>
<dbReference type="EMBL" id="CR380958">
    <property type="protein sequence ID" value="CAG61941.1"/>
    <property type="molecule type" value="Genomic_DNA"/>
</dbReference>
<dbReference type="RefSeq" id="XP_448486.1">
    <property type="nucleotide sequence ID" value="XM_448486.1"/>
</dbReference>
<dbReference type="RefSeq" id="XP_448971.1">
    <property type="nucleotide sequence ID" value="XM_448971.1"/>
</dbReference>
<dbReference type="SMR" id="Q6FLC3"/>
<dbReference type="FunCoup" id="Q6FLC3">
    <property type="interactions" value="847"/>
</dbReference>
<dbReference type="STRING" id="284593.Q6FLC3"/>
<dbReference type="EnsemblFungi" id="CAGL0K06061g-T">
    <property type="protein sequence ID" value="CAGL0K06061g-T-p1"/>
    <property type="gene ID" value="CAGL0K06061g"/>
</dbReference>
<dbReference type="EnsemblFungi" id="CAGL0L04510g-T">
    <property type="protein sequence ID" value="CAGL0L04510g-T-p1"/>
    <property type="gene ID" value="CAGL0L04510g"/>
</dbReference>
<dbReference type="KEGG" id="cgr:2890451"/>
<dbReference type="KEGG" id="cgr:2890641"/>
<dbReference type="CGD" id="CAL0133871">
    <property type="gene designation" value="CAGL0K06061g"/>
</dbReference>
<dbReference type="CGD" id="CAL0135818">
    <property type="gene designation" value="CAGL0L04510g"/>
</dbReference>
<dbReference type="VEuPathDB" id="FungiDB:B1J91_K06061g"/>
<dbReference type="VEuPathDB" id="FungiDB:B1J91_L04510g"/>
<dbReference type="VEuPathDB" id="FungiDB:CAGL0K06061g"/>
<dbReference type="VEuPathDB" id="FungiDB:CAGL0L04510g"/>
<dbReference type="eggNOG" id="KOG3502">
    <property type="taxonomic scope" value="Eukaryota"/>
</dbReference>
<dbReference type="HOGENOM" id="CLU_178987_1_0_1"/>
<dbReference type="InParanoid" id="Q6FLC3"/>
<dbReference type="OMA" id="NTGMHGE"/>
<dbReference type="Proteomes" id="UP000002428">
    <property type="component" value="Chromosome K"/>
</dbReference>
<dbReference type="Proteomes" id="UP000002428">
    <property type="component" value="Chromosome L"/>
</dbReference>
<dbReference type="GO" id="GO:0022627">
    <property type="term" value="C:cytosolic small ribosomal subunit"/>
    <property type="evidence" value="ECO:0007669"/>
    <property type="project" value="TreeGrafter"/>
</dbReference>
<dbReference type="GO" id="GO:0062040">
    <property type="term" value="C:fungal biofilm matrix"/>
    <property type="evidence" value="ECO:0000314"/>
    <property type="project" value="CGD"/>
</dbReference>
<dbReference type="GO" id="GO:0003735">
    <property type="term" value="F:structural constituent of ribosome"/>
    <property type="evidence" value="ECO:0007669"/>
    <property type="project" value="InterPro"/>
</dbReference>
<dbReference type="GO" id="GO:0030490">
    <property type="term" value="P:maturation of SSU-rRNA"/>
    <property type="evidence" value="ECO:0007669"/>
    <property type="project" value="TreeGrafter"/>
</dbReference>
<dbReference type="GO" id="GO:0000028">
    <property type="term" value="P:ribosomal small subunit assembly"/>
    <property type="evidence" value="ECO:0007669"/>
    <property type="project" value="TreeGrafter"/>
</dbReference>
<dbReference type="GO" id="GO:0006412">
    <property type="term" value="P:translation"/>
    <property type="evidence" value="ECO:0007669"/>
    <property type="project" value="InterPro"/>
</dbReference>
<dbReference type="CDD" id="cd04457">
    <property type="entry name" value="S1_S28E"/>
    <property type="match status" value="1"/>
</dbReference>
<dbReference type="FunFam" id="2.40.50.140:FF:000025">
    <property type="entry name" value="40S ribosomal protein S28"/>
    <property type="match status" value="1"/>
</dbReference>
<dbReference type="Gene3D" id="2.40.50.140">
    <property type="entry name" value="Nucleic acid-binding proteins"/>
    <property type="match status" value="1"/>
</dbReference>
<dbReference type="HAMAP" id="MF_00292">
    <property type="entry name" value="Ribosomal_eS28"/>
    <property type="match status" value="1"/>
</dbReference>
<dbReference type="InterPro" id="IPR012340">
    <property type="entry name" value="NA-bd_OB-fold"/>
</dbReference>
<dbReference type="InterPro" id="IPR000289">
    <property type="entry name" value="Ribosomal_eS28"/>
</dbReference>
<dbReference type="InterPro" id="IPR028626">
    <property type="entry name" value="Ribosomal_eS28_CS"/>
</dbReference>
<dbReference type="PANTHER" id="PTHR10769">
    <property type="entry name" value="40S RIBOSOMAL PROTEIN S28"/>
    <property type="match status" value="1"/>
</dbReference>
<dbReference type="PANTHER" id="PTHR10769:SF3">
    <property type="entry name" value="SMALL RIBOSOMAL SUBUNIT PROTEIN ES28"/>
    <property type="match status" value="1"/>
</dbReference>
<dbReference type="Pfam" id="PF01200">
    <property type="entry name" value="Ribosomal_S28e"/>
    <property type="match status" value="1"/>
</dbReference>
<dbReference type="SUPFAM" id="SSF50249">
    <property type="entry name" value="Nucleic acid-binding proteins"/>
    <property type="match status" value="1"/>
</dbReference>
<dbReference type="PROSITE" id="PS00961">
    <property type="entry name" value="RIBOSOMAL_S28E"/>
    <property type="match status" value="1"/>
</dbReference>
<keyword id="KW-1185">Reference proteome</keyword>
<keyword id="KW-0687">Ribonucleoprotein</keyword>
<keyword id="KW-0689">Ribosomal protein</keyword>
<organism>
    <name type="scientific">Candida glabrata (strain ATCC 2001 / BCRC 20586 / JCM 3761 / NBRC 0622 / NRRL Y-65 / CBS 138)</name>
    <name type="common">Yeast</name>
    <name type="synonym">Nakaseomyces glabratus</name>
    <dbReference type="NCBI Taxonomy" id="284593"/>
    <lineage>
        <taxon>Eukaryota</taxon>
        <taxon>Fungi</taxon>
        <taxon>Dikarya</taxon>
        <taxon>Ascomycota</taxon>
        <taxon>Saccharomycotina</taxon>
        <taxon>Saccharomycetes</taxon>
        <taxon>Saccharomycetales</taxon>
        <taxon>Saccharomycetaceae</taxon>
        <taxon>Nakaseomyces</taxon>
    </lineage>
</organism>
<comment type="similarity">
    <text evidence="1">Belongs to the eukaryotic ribosomal protein eS28 family.</text>
</comment>
<reference key="1">
    <citation type="journal article" date="2004" name="Nature">
        <title>Genome evolution in yeasts.</title>
        <authorList>
            <person name="Dujon B."/>
            <person name="Sherman D."/>
            <person name="Fischer G."/>
            <person name="Durrens P."/>
            <person name="Casaregola S."/>
            <person name="Lafontaine I."/>
            <person name="de Montigny J."/>
            <person name="Marck C."/>
            <person name="Neuveglise C."/>
            <person name="Talla E."/>
            <person name="Goffard N."/>
            <person name="Frangeul L."/>
            <person name="Aigle M."/>
            <person name="Anthouard V."/>
            <person name="Babour A."/>
            <person name="Barbe V."/>
            <person name="Barnay S."/>
            <person name="Blanchin S."/>
            <person name="Beckerich J.-M."/>
            <person name="Beyne E."/>
            <person name="Bleykasten C."/>
            <person name="Boisrame A."/>
            <person name="Boyer J."/>
            <person name="Cattolico L."/>
            <person name="Confanioleri F."/>
            <person name="de Daruvar A."/>
            <person name="Despons L."/>
            <person name="Fabre E."/>
            <person name="Fairhead C."/>
            <person name="Ferry-Dumazet H."/>
            <person name="Groppi A."/>
            <person name="Hantraye F."/>
            <person name="Hennequin C."/>
            <person name="Jauniaux N."/>
            <person name="Joyet P."/>
            <person name="Kachouri R."/>
            <person name="Kerrest A."/>
            <person name="Koszul R."/>
            <person name="Lemaire M."/>
            <person name="Lesur I."/>
            <person name="Ma L."/>
            <person name="Muller H."/>
            <person name="Nicaud J.-M."/>
            <person name="Nikolski M."/>
            <person name="Oztas S."/>
            <person name="Ozier-Kalogeropoulos O."/>
            <person name="Pellenz S."/>
            <person name="Potier S."/>
            <person name="Richard G.-F."/>
            <person name="Straub M.-L."/>
            <person name="Suleau A."/>
            <person name="Swennen D."/>
            <person name="Tekaia F."/>
            <person name="Wesolowski-Louvel M."/>
            <person name="Westhof E."/>
            <person name="Wirth B."/>
            <person name="Zeniou-Meyer M."/>
            <person name="Zivanovic Y."/>
            <person name="Bolotin-Fukuhara M."/>
            <person name="Thierry A."/>
            <person name="Bouchier C."/>
            <person name="Caudron B."/>
            <person name="Scarpelli C."/>
            <person name="Gaillardin C."/>
            <person name="Weissenbach J."/>
            <person name="Wincker P."/>
            <person name="Souciet J.-L."/>
        </authorList>
    </citation>
    <scope>NUCLEOTIDE SEQUENCE [LARGE SCALE GENOMIC DNA]</scope>
    <source>
        <strain>ATCC 2001 / BCRC 20586 / JCM 3761 / NBRC 0622 / NRRL Y-65 / CBS 138</strain>
    </source>
</reference>
<accession>Q6FLC3</accession>
<name>RS28_CANGA</name>
<sequence length="67" mass="7620">MDNKTPVTLARVIKVLGRTGSRGGVTQVRVEFLEDTSRTIVRNVKGPVRENDILVLMESEREARRLR</sequence>
<feature type="chain" id="PRO_0000136837" description="Small ribosomal subunit protein eS28">
    <location>
        <begin position="1"/>
        <end position="67"/>
    </location>
</feature>
<protein>
    <recommendedName>
        <fullName evidence="1">Small ribosomal subunit protein eS28</fullName>
    </recommendedName>
    <alternativeName>
        <fullName>40S ribosomal protein S28</fullName>
    </alternativeName>
</protein>